<protein>
    <recommendedName>
        <fullName evidence="1">Guanylate kinase</fullName>
        <ecNumber evidence="1">2.7.4.8</ecNumber>
    </recommendedName>
    <alternativeName>
        <fullName evidence="1">GMP kinase</fullName>
    </alternativeName>
</protein>
<comment type="function">
    <text evidence="1">Essential for recycling GMP and indirectly, cGMP.</text>
</comment>
<comment type="catalytic activity">
    <reaction evidence="1">
        <text>GMP + ATP = GDP + ADP</text>
        <dbReference type="Rhea" id="RHEA:20780"/>
        <dbReference type="ChEBI" id="CHEBI:30616"/>
        <dbReference type="ChEBI" id="CHEBI:58115"/>
        <dbReference type="ChEBI" id="CHEBI:58189"/>
        <dbReference type="ChEBI" id="CHEBI:456216"/>
        <dbReference type="EC" id="2.7.4.8"/>
    </reaction>
</comment>
<comment type="subcellular location">
    <subcellularLocation>
        <location evidence="1">Cytoplasm</location>
    </subcellularLocation>
</comment>
<comment type="similarity">
    <text evidence="1">Belongs to the guanylate kinase family.</text>
</comment>
<dbReference type="EC" id="2.7.4.8" evidence="1"/>
<dbReference type="EMBL" id="CP000089">
    <property type="protein sequence ID" value="AAZ48573.1"/>
    <property type="molecule type" value="Genomic_DNA"/>
</dbReference>
<dbReference type="SMR" id="Q479A8"/>
<dbReference type="STRING" id="159087.Daro_3845"/>
<dbReference type="KEGG" id="dar:Daro_3845"/>
<dbReference type="eggNOG" id="COG0194">
    <property type="taxonomic scope" value="Bacteria"/>
</dbReference>
<dbReference type="HOGENOM" id="CLU_001715_1_2_4"/>
<dbReference type="OrthoDB" id="9808150at2"/>
<dbReference type="GO" id="GO:0005829">
    <property type="term" value="C:cytosol"/>
    <property type="evidence" value="ECO:0007669"/>
    <property type="project" value="TreeGrafter"/>
</dbReference>
<dbReference type="GO" id="GO:0005524">
    <property type="term" value="F:ATP binding"/>
    <property type="evidence" value="ECO:0007669"/>
    <property type="project" value="UniProtKB-UniRule"/>
</dbReference>
<dbReference type="GO" id="GO:0004385">
    <property type="term" value="F:guanylate kinase activity"/>
    <property type="evidence" value="ECO:0007669"/>
    <property type="project" value="UniProtKB-UniRule"/>
</dbReference>
<dbReference type="CDD" id="cd00071">
    <property type="entry name" value="GMPK"/>
    <property type="match status" value="1"/>
</dbReference>
<dbReference type="FunFam" id="3.40.50.300:FF:000084">
    <property type="entry name" value="Guanylate kinase"/>
    <property type="match status" value="1"/>
</dbReference>
<dbReference type="FunFam" id="3.30.63.10:FF:000002">
    <property type="entry name" value="Guanylate kinase 1"/>
    <property type="match status" value="1"/>
</dbReference>
<dbReference type="Gene3D" id="3.30.63.10">
    <property type="entry name" value="Guanylate Kinase phosphate binding domain"/>
    <property type="match status" value="1"/>
</dbReference>
<dbReference type="Gene3D" id="3.40.50.300">
    <property type="entry name" value="P-loop containing nucleotide triphosphate hydrolases"/>
    <property type="match status" value="1"/>
</dbReference>
<dbReference type="HAMAP" id="MF_00328">
    <property type="entry name" value="Guanylate_kinase"/>
    <property type="match status" value="1"/>
</dbReference>
<dbReference type="InterPro" id="IPR008145">
    <property type="entry name" value="GK/Ca_channel_bsu"/>
</dbReference>
<dbReference type="InterPro" id="IPR008144">
    <property type="entry name" value="Guanylate_kin-like_dom"/>
</dbReference>
<dbReference type="InterPro" id="IPR017665">
    <property type="entry name" value="Guanylate_kinase"/>
</dbReference>
<dbReference type="InterPro" id="IPR020590">
    <property type="entry name" value="Guanylate_kinase_CS"/>
</dbReference>
<dbReference type="InterPro" id="IPR027417">
    <property type="entry name" value="P-loop_NTPase"/>
</dbReference>
<dbReference type="NCBIfam" id="TIGR03263">
    <property type="entry name" value="guanyl_kin"/>
    <property type="match status" value="1"/>
</dbReference>
<dbReference type="PANTHER" id="PTHR23117:SF13">
    <property type="entry name" value="GUANYLATE KINASE"/>
    <property type="match status" value="1"/>
</dbReference>
<dbReference type="PANTHER" id="PTHR23117">
    <property type="entry name" value="GUANYLATE KINASE-RELATED"/>
    <property type="match status" value="1"/>
</dbReference>
<dbReference type="Pfam" id="PF00625">
    <property type="entry name" value="Guanylate_kin"/>
    <property type="match status" value="1"/>
</dbReference>
<dbReference type="SMART" id="SM00072">
    <property type="entry name" value="GuKc"/>
    <property type="match status" value="1"/>
</dbReference>
<dbReference type="SUPFAM" id="SSF52540">
    <property type="entry name" value="P-loop containing nucleoside triphosphate hydrolases"/>
    <property type="match status" value="1"/>
</dbReference>
<dbReference type="PROSITE" id="PS00856">
    <property type="entry name" value="GUANYLATE_KINASE_1"/>
    <property type="match status" value="1"/>
</dbReference>
<dbReference type="PROSITE" id="PS50052">
    <property type="entry name" value="GUANYLATE_KINASE_2"/>
    <property type="match status" value="1"/>
</dbReference>
<proteinExistence type="inferred from homology"/>
<organism>
    <name type="scientific">Dechloromonas aromatica (strain RCB)</name>
    <dbReference type="NCBI Taxonomy" id="159087"/>
    <lineage>
        <taxon>Bacteria</taxon>
        <taxon>Pseudomonadati</taxon>
        <taxon>Pseudomonadota</taxon>
        <taxon>Betaproteobacteria</taxon>
        <taxon>Rhodocyclales</taxon>
        <taxon>Azonexaceae</taxon>
        <taxon>Dechloromonas</taxon>
    </lineage>
</organism>
<feature type="chain" id="PRO_0000266313" description="Guanylate kinase">
    <location>
        <begin position="1"/>
        <end position="202"/>
    </location>
</feature>
<feature type="domain" description="Guanylate kinase-like" evidence="1">
    <location>
        <begin position="3"/>
        <end position="181"/>
    </location>
</feature>
<feature type="binding site" evidence="1">
    <location>
        <begin position="10"/>
        <end position="17"/>
    </location>
    <ligand>
        <name>ATP</name>
        <dbReference type="ChEBI" id="CHEBI:30616"/>
    </ligand>
</feature>
<reference key="1">
    <citation type="journal article" date="2009" name="BMC Genomics">
        <title>Metabolic analysis of the soil microbe Dechloromonas aromatica str. RCB: indications of a surprisingly complex life-style and cryptic anaerobic pathways for aromatic degradation.</title>
        <authorList>
            <person name="Salinero K.K."/>
            <person name="Keller K."/>
            <person name="Feil W.S."/>
            <person name="Feil H."/>
            <person name="Trong S."/>
            <person name="Di Bartolo G."/>
            <person name="Lapidus A."/>
        </authorList>
    </citation>
    <scope>NUCLEOTIDE SEQUENCE [LARGE SCALE GENOMIC DNA]</scope>
    <source>
        <strain>RCB</strain>
    </source>
</reference>
<sequence length="202" mass="22582">MAGNLFVVAAPSGAGKTTLVRMLLEQESSVNLSISYTTRHPRPGEQNGREYHFVETPEFRAMIARQEFLEWAEVHGNFYGTSKKWIADQLAAGRDVLLEIDWQGAQQVRALFPQAIGVFILPPSMEELTRRLTGRGTDSPDVIDRRLAAAQAEMRHVGEFDYVIINDQLAQALDDLRAVVRASGLSFGAQRARHAALFERMI</sequence>
<gene>
    <name evidence="1" type="primary">gmk</name>
    <name type="ordered locus">Daro_3845</name>
</gene>
<evidence type="ECO:0000255" key="1">
    <source>
        <dbReference type="HAMAP-Rule" id="MF_00328"/>
    </source>
</evidence>
<keyword id="KW-0067">ATP-binding</keyword>
<keyword id="KW-0963">Cytoplasm</keyword>
<keyword id="KW-0418">Kinase</keyword>
<keyword id="KW-0547">Nucleotide-binding</keyword>
<keyword id="KW-0808">Transferase</keyword>
<accession>Q479A8</accession>
<name>KGUA_DECAR</name>